<dbReference type="EMBL" id="BC102794">
    <property type="protein sequence ID" value="AAI02795.1"/>
    <property type="molecule type" value="mRNA"/>
</dbReference>
<dbReference type="RefSeq" id="NP_001029958.1">
    <property type="nucleotide sequence ID" value="NM_001034786.2"/>
</dbReference>
<dbReference type="RefSeq" id="XP_059742626.1">
    <property type="nucleotide sequence ID" value="XM_059886643.1"/>
</dbReference>
<dbReference type="RefSeq" id="XP_059742630.1">
    <property type="nucleotide sequence ID" value="XM_059886647.1"/>
</dbReference>
<dbReference type="RefSeq" id="XP_059742634.1">
    <property type="nucleotide sequence ID" value="XM_059886651.1"/>
</dbReference>
<dbReference type="RefSeq" id="XP_059742636.1">
    <property type="nucleotide sequence ID" value="XM_059886653.1"/>
</dbReference>
<dbReference type="RefSeq" id="XP_059742637.1">
    <property type="nucleotide sequence ID" value="XM_059886654.1"/>
</dbReference>
<dbReference type="FunCoup" id="Q3SZL9">
    <property type="interactions" value="2282"/>
</dbReference>
<dbReference type="STRING" id="9913.ENSBTAP00000001660"/>
<dbReference type="PaxDb" id="9913-ENSBTAP00000001660"/>
<dbReference type="Ensembl" id="ENSBTAT00000001660.3">
    <property type="protein sequence ID" value="ENSBTAP00000001660.2"/>
    <property type="gene ID" value="ENSBTAG00000001258.3"/>
</dbReference>
<dbReference type="GeneID" id="615627"/>
<dbReference type="KEGG" id="bta:615627"/>
<dbReference type="CTD" id="757"/>
<dbReference type="VEuPathDB" id="HostDB:ENSBTAG00000001258"/>
<dbReference type="VGNC" id="VGNC:36093">
    <property type="gene designation" value="TMEM50B"/>
</dbReference>
<dbReference type="eggNOG" id="KOG3393">
    <property type="taxonomic scope" value="Eukaryota"/>
</dbReference>
<dbReference type="GeneTree" id="ENSGT00940000155131"/>
<dbReference type="HOGENOM" id="CLU_096876_1_0_1"/>
<dbReference type="InParanoid" id="Q3SZL9"/>
<dbReference type="OMA" id="LWIMFAD"/>
<dbReference type="OrthoDB" id="268928at2759"/>
<dbReference type="TreeFam" id="TF300282"/>
<dbReference type="Proteomes" id="UP000009136">
    <property type="component" value="Chromosome 1"/>
</dbReference>
<dbReference type="Bgee" id="ENSBTAG00000001258">
    <property type="expression patterns" value="Expressed in spermatocyte and 103 other cell types or tissues"/>
</dbReference>
<dbReference type="GO" id="GO:0005789">
    <property type="term" value="C:endoplasmic reticulum membrane"/>
    <property type="evidence" value="ECO:0007669"/>
    <property type="project" value="UniProtKB-SubCell"/>
</dbReference>
<dbReference type="GO" id="GO:0000139">
    <property type="term" value="C:Golgi membrane"/>
    <property type="evidence" value="ECO:0007669"/>
    <property type="project" value="UniProtKB-SubCell"/>
</dbReference>
<dbReference type="GO" id="GO:0032511">
    <property type="term" value="P:late endosome to vacuole transport via multivesicular body sorting pathway"/>
    <property type="evidence" value="ECO:0000318"/>
    <property type="project" value="GO_Central"/>
</dbReference>
<dbReference type="InterPro" id="IPR007919">
    <property type="entry name" value="UPF0220"/>
</dbReference>
<dbReference type="PANTHER" id="PTHR13180">
    <property type="entry name" value="SMALL MEMBRANE PROTEIN-RELATED"/>
    <property type="match status" value="1"/>
</dbReference>
<dbReference type="Pfam" id="PF05255">
    <property type="entry name" value="UPF0220"/>
    <property type="match status" value="1"/>
</dbReference>
<evidence type="ECO:0000250" key="1">
    <source>
        <dbReference type="UniProtKB" id="P56557"/>
    </source>
</evidence>
<evidence type="ECO:0000250" key="2">
    <source>
        <dbReference type="UniProtKB" id="Q9D1X9"/>
    </source>
</evidence>
<evidence type="ECO:0000255" key="3"/>
<evidence type="ECO:0000305" key="4"/>
<accession>Q3SZL9</accession>
<name>TM50B_BOVIN</name>
<keyword id="KW-0007">Acetylation</keyword>
<keyword id="KW-0256">Endoplasmic reticulum</keyword>
<keyword id="KW-0333">Golgi apparatus</keyword>
<keyword id="KW-0472">Membrane</keyword>
<keyword id="KW-1185">Reference proteome</keyword>
<keyword id="KW-0812">Transmembrane</keyword>
<keyword id="KW-1133">Transmembrane helix</keyword>
<gene>
    <name type="primary">TMEM50B</name>
</gene>
<proteinExistence type="evidence at transcript level"/>
<reference key="1">
    <citation type="submission" date="2005-08" db="EMBL/GenBank/DDBJ databases">
        <authorList>
            <consortium name="NIH - Mammalian Gene Collection (MGC) project"/>
        </authorList>
    </citation>
    <scope>NUCLEOTIDE SEQUENCE [LARGE SCALE MRNA]</scope>
    <source>
        <strain>Crossbred X Angus</strain>
        <tissue>Ileum</tissue>
    </source>
</reference>
<sequence>MAGFLDNFRWPECECIDWSERRNAVASVVAGILFFTGWWIMIDAAVVYPKPEQLNHAFHTCGVFSTLAFFMINAVSNAQVRGDSYESGCLGRTGARVWLFIGFMLMFGSLIASMWILFGAYVTQNTDVYPGLAVFFQNALIFFSTLIYKFGRTEELWT</sequence>
<organism>
    <name type="scientific">Bos taurus</name>
    <name type="common">Bovine</name>
    <dbReference type="NCBI Taxonomy" id="9913"/>
    <lineage>
        <taxon>Eukaryota</taxon>
        <taxon>Metazoa</taxon>
        <taxon>Chordata</taxon>
        <taxon>Craniata</taxon>
        <taxon>Vertebrata</taxon>
        <taxon>Euteleostomi</taxon>
        <taxon>Mammalia</taxon>
        <taxon>Eutheria</taxon>
        <taxon>Laurasiatheria</taxon>
        <taxon>Artiodactyla</taxon>
        <taxon>Ruminantia</taxon>
        <taxon>Pecora</taxon>
        <taxon>Bovidae</taxon>
        <taxon>Bovinae</taxon>
        <taxon>Bos</taxon>
    </lineage>
</organism>
<protein>
    <recommendedName>
        <fullName>Transmembrane protein 50B</fullName>
    </recommendedName>
</protein>
<feature type="initiator methionine" description="Removed" evidence="1">
    <location>
        <position position="1"/>
    </location>
</feature>
<feature type="chain" id="PRO_0000328499" description="Transmembrane protein 50B">
    <location>
        <begin position="2"/>
        <end position="158"/>
    </location>
</feature>
<feature type="transmembrane region" description="Helical" evidence="3">
    <location>
        <begin position="28"/>
        <end position="48"/>
    </location>
</feature>
<feature type="transmembrane region" description="Helical" evidence="3">
    <location>
        <begin position="56"/>
        <end position="76"/>
    </location>
</feature>
<feature type="transmembrane region" description="Helical" evidence="3">
    <location>
        <begin position="98"/>
        <end position="118"/>
    </location>
</feature>
<feature type="transmembrane region" description="Helical" evidence="3">
    <location>
        <begin position="128"/>
        <end position="148"/>
    </location>
</feature>
<feature type="modified residue" description="N-acetylalanine" evidence="1">
    <location>
        <position position="2"/>
    </location>
</feature>
<comment type="subunit">
    <text evidence="2">May form homotrimers or homodimers.</text>
</comment>
<comment type="subcellular location">
    <subcellularLocation>
        <location evidence="2">Endoplasmic reticulum membrane</location>
        <topology evidence="3">Multi-pass membrane protein</topology>
    </subcellularLocation>
    <subcellularLocation>
        <location evidence="2">Golgi apparatus membrane</location>
        <topology evidence="3">Multi-pass membrane protein</topology>
    </subcellularLocation>
</comment>
<comment type="similarity">
    <text evidence="4">Belongs to the UPF0220 family.</text>
</comment>